<comment type="function">
    <text evidence="1">The RecF protein is involved in DNA metabolism; it is required for DNA replication and normal SOS inducibility. RecF binds preferentially to single-stranded, linear DNA. It also seems to bind ATP.</text>
</comment>
<comment type="subcellular location">
    <subcellularLocation>
        <location evidence="1">Cytoplasm</location>
    </subcellularLocation>
</comment>
<comment type="similarity">
    <text evidence="1">Belongs to the RecF family.</text>
</comment>
<sequence>MKLKSLQLVNFRNYKKLHLEFNGKVNLLVGKNGQGKTNIVESIYMLSFGKSFRTNKDKEMVRFNSENLYIGGSFSKYNKYSLIELIIGKDKKGIRINKVPLQKIQELLGNLNVVIFSPEDLRLVKEGPKERRAFIDKEISQIIPKYYKYLTNYNKTLSQRSRVLKNIHVDEALLDVYDDTLAKYGSYIYILRRDFIKKIANISENMHMNLTNGVERLSIRYKNQINITDEDTIDTVYNKFLAKLSSNRPNDIESKTTRYGIHKDDLNIFINDLDARLFGSQGQQRTASISLKLSEIELIKNEVEEYPVLILDDVFSELDEARQKLLVNNLSNVQMFITSAEVSHKKIFDEKNVTIFNIENGDVISIENGGN</sequence>
<dbReference type="EMBL" id="AM180355">
    <property type="protein sequence ID" value="CAJ66818.1"/>
    <property type="molecule type" value="Genomic_DNA"/>
</dbReference>
<dbReference type="RefSeq" id="WP_003429303.1">
    <property type="nucleotide sequence ID" value="NZ_JAUPES010000007.1"/>
</dbReference>
<dbReference type="RefSeq" id="YP_001086467.1">
    <property type="nucleotide sequence ID" value="NC_009089.1"/>
</dbReference>
<dbReference type="SMR" id="Q18C86"/>
<dbReference type="STRING" id="272563.CD630_00040"/>
<dbReference type="EnsemblBacteria" id="CAJ66818">
    <property type="protein sequence ID" value="CAJ66818"/>
    <property type="gene ID" value="CD630_00040"/>
</dbReference>
<dbReference type="GeneID" id="66352442"/>
<dbReference type="KEGG" id="cdf:CD630_00040"/>
<dbReference type="KEGG" id="pdc:CDIF630_00004"/>
<dbReference type="PATRIC" id="fig|272563.120.peg.4"/>
<dbReference type="eggNOG" id="COG1195">
    <property type="taxonomic scope" value="Bacteria"/>
</dbReference>
<dbReference type="OrthoDB" id="9803889at2"/>
<dbReference type="PhylomeDB" id="Q18C86"/>
<dbReference type="BioCyc" id="PDIF272563:G12WB-4-MONOMER"/>
<dbReference type="Proteomes" id="UP000001978">
    <property type="component" value="Chromosome"/>
</dbReference>
<dbReference type="GO" id="GO:0005737">
    <property type="term" value="C:cytoplasm"/>
    <property type="evidence" value="ECO:0007669"/>
    <property type="project" value="UniProtKB-SubCell"/>
</dbReference>
<dbReference type="GO" id="GO:0005524">
    <property type="term" value="F:ATP binding"/>
    <property type="evidence" value="ECO:0007669"/>
    <property type="project" value="UniProtKB-UniRule"/>
</dbReference>
<dbReference type="GO" id="GO:0003697">
    <property type="term" value="F:single-stranded DNA binding"/>
    <property type="evidence" value="ECO:0007669"/>
    <property type="project" value="UniProtKB-UniRule"/>
</dbReference>
<dbReference type="GO" id="GO:0006260">
    <property type="term" value="P:DNA replication"/>
    <property type="evidence" value="ECO:0007669"/>
    <property type="project" value="UniProtKB-UniRule"/>
</dbReference>
<dbReference type="GO" id="GO:0000731">
    <property type="term" value="P:DNA synthesis involved in DNA repair"/>
    <property type="evidence" value="ECO:0007669"/>
    <property type="project" value="TreeGrafter"/>
</dbReference>
<dbReference type="GO" id="GO:0006302">
    <property type="term" value="P:double-strand break repair"/>
    <property type="evidence" value="ECO:0007669"/>
    <property type="project" value="TreeGrafter"/>
</dbReference>
<dbReference type="GO" id="GO:0009432">
    <property type="term" value="P:SOS response"/>
    <property type="evidence" value="ECO:0007669"/>
    <property type="project" value="UniProtKB-UniRule"/>
</dbReference>
<dbReference type="CDD" id="cd03242">
    <property type="entry name" value="ABC_RecF"/>
    <property type="match status" value="1"/>
</dbReference>
<dbReference type="Gene3D" id="3.40.50.300">
    <property type="entry name" value="P-loop containing nucleotide triphosphate hydrolases"/>
    <property type="match status" value="1"/>
</dbReference>
<dbReference type="Gene3D" id="1.20.1050.90">
    <property type="entry name" value="RecF/RecN/SMC, N-terminal domain"/>
    <property type="match status" value="1"/>
</dbReference>
<dbReference type="HAMAP" id="MF_00365">
    <property type="entry name" value="RecF"/>
    <property type="match status" value="1"/>
</dbReference>
<dbReference type="InterPro" id="IPR001238">
    <property type="entry name" value="DNA-binding_RecF"/>
</dbReference>
<dbReference type="InterPro" id="IPR018078">
    <property type="entry name" value="DNA-binding_RecF_CS"/>
</dbReference>
<dbReference type="InterPro" id="IPR027417">
    <property type="entry name" value="P-loop_NTPase"/>
</dbReference>
<dbReference type="InterPro" id="IPR003395">
    <property type="entry name" value="RecF/RecN/SMC_N"/>
</dbReference>
<dbReference type="InterPro" id="IPR042174">
    <property type="entry name" value="RecF_2"/>
</dbReference>
<dbReference type="NCBIfam" id="TIGR00611">
    <property type="entry name" value="recf"/>
    <property type="match status" value="1"/>
</dbReference>
<dbReference type="PANTHER" id="PTHR32182">
    <property type="entry name" value="DNA REPLICATION AND REPAIR PROTEIN RECF"/>
    <property type="match status" value="1"/>
</dbReference>
<dbReference type="PANTHER" id="PTHR32182:SF0">
    <property type="entry name" value="DNA REPLICATION AND REPAIR PROTEIN RECF"/>
    <property type="match status" value="1"/>
</dbReference>
<dbReference type="Pfam" id="PF02463">
    <property type="entry name" value="SMC_N"/>
    <property type="match status" value="1"/>
</dbReference>
<dbReference type="SUPFAM" id="SSF52540">
    <property type="entry name" value="P-loop containing nucleoside triphosphate hydrolases"/>
    <property type="match status" value="1"/>
</dbReference>
<dbReference type="PROSITE" id="PS00617">
    <property type="entry name" value="RECF_1"/>
    <property type="match status" value="1"/>
</dbReference>
<dbReference type="PROSITE" id="PS00618">
    <property type="entry name" value="RECF_2"/>
    <property type="match status" value="1"/>
</dbReference>
<keyword id="KW-0067">ATP-binding</keyword>
<keyword id="KW-0963">Cytoplasm</keyword>
<keyword id="KW-0227">DNA damage</keyword>
<keyword id="KW-0234">DNA repair</keyword>
<keyword id="KW-0235">DNA replication</keyword>
<keyword id="KW-0238">DNA-binding</keyword>
<keyword id="KW-0547">Nucleotide-binding</keyword>
<keyword id="KW-1185">Reference proteome</keyword>
<keyword id="KW-0742">SOS response</keyword>
<organism>
    <name type="scientific">Clostridioides difficile (strain 630)</name>
    <name type="common">Peptoclostridium difficile</name>
    <dbReference type="NCBI Taxonomy" id="272563"/>
    <lineage>
        <taxon>Bacteria</taxon>
        <taxon>Bacillati</taxon>
        <taxon>Bacillota</taxon>
        <taxon>Clostridia</taxon>
        <taxon>Peptostreptococcales</taxon>
        <taxon>Peptostreptococcaceae</taxon>
        <taxon>Clostridioides</taxon>
    </lineage>
</organism>
<gene>
    <name evidence="1" type="primary">recF</name>
    <name type="ordered locus">CD630_00040</name>
</gene>
<name>RECF_CLOD6</name>
<reference key="1">
    <citation type="journal article" date="2006" name="Nat. Genet.">
        <title>The multidrug-resistant human pathogen Clostridium difficile has a highly mobile, mosaic genome.</title>
        <authorList>
            <person name="Sebaihia M."/>
            <person name="Wren B.W."/>
            <person name="Mullany P."/>
            <person name="Fairweather N.F."/>
            <person name="Minton N."/>
            <person name="Stabler R."/>
            <person name="Thomson N.R."/>
            <person name="Roberts A.P."/>
            <person name="Cerdeno-Tarraga A.M."/>
            <person name="Wang H."/>
            <person name="Holden M.T.G."/>
            <person name="Wright A."/>
            <person name="Churcher C."/>
            <person name="Quail M.A."/>
            <person name="Baker S."/>
            <person name="Bason N."/>
            <person name="Brooks K."/>
            <person name="Chillingworth T."/>
            <person name="Cronin A."/>
            <person name="Davis P."/>
            <person name="Dowd L."/>
            <person name="Fraser A."/>
            <person name="Feltwell T."/>
            <person name="Hance Z."/>
            <person name="Holroyd S."/>
            <person name="Jagels K."/>
            <person name="Moule S."/>
            <person name="Mungall K."/>
            <person name="Price C."/>
            <person name="Rabbinowitsch E."/>
            <person name="Sharp S."/>
            <person name="Simmonds M."/>
            <person name="Stevens K."/>
            <person name="Unwin L."/>
            <person name="Whithead S."/>
            <person name="Dupuy B."/>
            <person name="Dougan G."/>
            <person name="Barrell B."/>
            <person name="Parkhill J."/>
        </authorList>
    </citation>
    <scope>NUCLEOTIDE SEQUENCE [LARGE SCALE GENOMIC DNA]</scope>
    <source>
        <strain>630</strain>
    </source>
</reference>
<accession>Q18C86</accession>
<evidence type="ECO:0000255" key="1">
    <source>
        <dbReference type="HAMAP-Rule" id="MF_00365"/>
    </source>
</evidence>
<feature type="chain" id="PRO_1000048512" description="DNA replication and repair protein RecF">
    <location>
        <begin position="1"/>
        <end position="371"/>
    </location>
</feature>
<feature type="binding site" evidence="1">
    <location>
        <begin position="30"/>
        <end position="37"/>
    </location>
    <ligand>
        <name>ATP</name>
        <dbReference type="ChEBI" id="CHEBI:30616"/>
    </ligand>
</feature>
<proteinExistence type="inferred from homology"/>
<protein>
    <recommendedName>
        <fullName evidence="1">DNA replication and repair protein RecF</fullName>
    </recommendedName>
</protein>